<keyword id="KW-0066">ATP synthesis</keyword>
<keyword id="KW-0997">Cell inner membrane</keyword>
<keyword id="KW-1003">Cell membrane</keyword>
<keyword id="KW-0139">CF(1)</keyword>
<keyword id="KW-0375">Hydrogen ion transport</keyword>
<keyword id="KW-0406">Ion transport</keyword>
<keyword id="KW-0472">Membrane</keyword>
<keyword id="KW-0813">Transport</keyword>
<protein>
    <recommendedName>
        <fullName evidence="1">ATP synthase gamma chain</fullName>
    </recommendedName>
    <alternativeName>
        <fullName evidence="1">ATP synthase F1 sector gamma subunit</fullName>
    </alternativeName>
    <alternativeName>
        <fullName evidence="1">F-ATPase gamma subunit</fullName>
    </alternativeName>
</protein>
<name>ATPG_LEPBA</name>
<sequence length="289" mass="31779">MATPREIKKRINSVKNTRKITRTMEMVSTAKAKKATNKVNAAKPYADLTRELVSSLSSLASIIHSPYLRKPDKIRKVAILAIAANRGLCGGFNSNLLRMVKNRIEELKSKGVEVEVHAAGKKAISFFKFAKVELVTSYTNIDDKAGSKEANDLASYFMERFANESVDSVEIISTHYYSAANQKPETTTVLPLQMEETGSKGSSGPEVLYEPDPKTILENLLPMVIKTTFVKIILESVASEHIARRVAMKAATDAAGEMIKLLTRGYNRVRQAKITQEISEIVGGAEAIS</sequence>
<reference key="1">
    <citation type="journal article" date="2008" name="PLoS ONE">
        <title>Genome sequence of the saprophyte Leptospira biflexa provides insights into the evolution of Leptospira and the pathogenesis of leptospirosis.</title>
        <authorList>
            <person name="Picardeau M."/>
            <person name="Bulach D.M."/>
            <person name="Bouchier C."/>
            <person name="Zuerner R.L."/>
            <person name="Zidane N."/>
            <person name="Wilson P.J."/>
            <person name="Creno S."/>
            <person name="Kuczek E.S."/>
            <person name="Bommezzadri S."/>
            <person name="Davis J.C."/>
            <person name="McGrath A."/>
            <person name="Johnson M.J."/>
            <person name="Boursaux-Eude C."/>
            <person name="Seemann T."/>
            <person name="Rouy Z."/>
            <person name="Coppel R.L."/>
            <person name="Rood J.I."/>
            <person name="Lajus A."/>
            <person name="Davies J.K."/>
            <person name="Medigue C."/>
            <person name="Adler B."/>
        </authorList>
    </citation>
    <scope>NUCLEOTIDE SEQUENCE [LARGE SCALE GENOMIC DNA]</scope>
    <source>
        <strain>Patoc 1 / Ames</strain>
    </source>
</reference>
<gene>
    <name evidence="1" type="primary">atpG</name>
    <name type="ordered locus">LBF_0777</name>
</gene>
<evidence type="ECO:0000255" key="1">
    <source>
        <dbReference type="HAMAP-Rule" id="MF_00815"/>
    </source>
</evidence>
<accession>B0SDA4</accession>
<organism>
    <name type="scientific">Leptospira biflexa serovar Patoc (strain Patoc 1 / Ames)</name>
    <dbReference type="NCBI Taxonomy" id="355278"/>
    <lineage>
        <taxon>Bacteria</taxon>
        <taxon>Pseudomonadati</taxon>
        <taxon>Spirochaetota</taxon>
        <taxon>Spirochaetia</taxon>
        <taxon>Leptospirales</taxon>
        <taxon>Leptospiraceae</taxon>
        <taxon>Leptospira</taxon>
    </lineage>
</organism>
<dbReference type="EMBL" id="CP000777">
    <property type="protein sequence ID" value="ABZ93309.1"/>
    <property type="molecule type" value="Genomic_DNA"/>
</dbReference>
<dbReference type="RefSeq" id="WP_012387819.1">
    <property type="nucleotide sequence ID" value="NC_010842.1"/>
</dbReference>
<dbReference type="SMR" id="B0SDA4"/>
<dbReference type="KEGG" id="lbf:LBF_0777"/>
<dbReference type="HOGENOM" id="CLU_050669_0_0_12"/>
<dbReference type="GO" id="GO:0005886">
    <property type="term" value="C:plasma membrane"/>
    <property type="evidence" value="ECO:0007669"/>
    <property type="project" value="UniProtKB-SubCell"/>
</dbReference>
<dbReference type="GO" id="GO:0045259">
    <property type="term" value="C:proton-transporting ATP synthase complex"/>
    <property type="evidence" value="ECO:0007669"/>
    <property type="project" value="UniProtKB-KW"/>
</dbReference>
<dbReference type="GO" id="GO:0005524">
    <property type="term" value="F:ATP binding"/>
    <property type="evidence" value="ECO:0007669"/>
    <property type="project" value="UniProtKB-UniRule"/>
</dbReference>
<dbReference type="GO" id="GO:0046933">
    <property type="term" value="F:proton-transporting ATP synthase activity, rotational mechanism"/>
    <property type="evidence" value="ECO:0007669"/>
    <property type="project" value="UniProtKB-UniRule"/>
</dbReference>
<dbReference type="GO" id="GO:0042777">
    <property type="term" value="P:proton motive force-driven plasma membrane ATP synthesis"/>
    <property type="evidence" value="ECO:0007669"/>
    <property type="project" value="UniProtKB-UniRule"/>
</dbReference>
<dbReference type="CDD" id="cd12151">
    <property type="entry name" value="F1-ATPase_gamma"/>
    <property type="match status" value="1"/>
</dbReference>
<dbReference type="FunFam" id="3.40.1380.10:FF:000006">
    <property type="entry name" value="ATP synthase gamma chain"/>
    <property type="match status" value="1"/>
</dbReference>
<dbReference type="Gene3D" id="3.40.1380.10">
    <property type="match status" value="1"/>
</dbReference>
<dbReference type="Gene3D" id="1.10.287.80">
    <property type="entry name" value="ATP synthase, gamma subunit, helix hairpin domain"/>
    <property type="match status" value="1"/>
</dbReference>
<dbReference type="HAMAP" id="MF_00815">
    <property type="entry name" value="ATP_synth_gamma_bact"/>
    <property type="match status" value="1"/>
</dbReference>
<dbReference type="InterPro" id="IPR035968">
    <property type="entry name" value="ATP_synth_F1_ATPase_gsu"/>
</dbReference>
<dbReference type="InterPro" id="IPR000131">
    <property type="entry name" value="ATP_synth_F1_gsu"/>
</dbReference>
<dbReference type="InterPro" id="IPR023632">
    <property type="entry name" value="ATP_synth_F1_gsu_CS"/>
</dbReference>
<dbReference type="NCBIfam" id="TIGR01146">
    <property type="entry name" value="ATPsyn_F1gamma"/>
    <property type="match status" value="1"/>
</dbReference>
<dbReference type="NCBIfam" id="NF009960">
    <property type="entry name" value="PRK13427.1"/>
    <property type="match status" value="1"/>
</dbReference>
<dbReference type="PANTHER" id="PTHR11693">
    <property type="entry name" value="ATP SYNTHASE GAMMA CHAIN"/>
    <property type="match status" value="1"/>
</dbReference>
<dbReference type="PANTHER" id="PTHR11693:SF22">
    <property type="entry name" value="ATP SYNTHASE SUBUNIT GAMMA, MITOCHONDRIAL"/>
    <property type="match status" value="1"/>
</dbReference>
<dbReference type="Pfam" id="PF00231">
    <property type="entry name" value="ATP-synt"/>
    <property type="match status" value="1"/>
</dbReference>
<dbReference type="PRINTS" id="PR00126">
    <property type="entry name" value="ATPASEGAMMA"/>
</dbReference>
<dbReference type="SUPFAM" id="SSF52943">
    <property type="entry name" value="ATP synthase (F1-ATPase), gamma subunit"/>
    <property type="match status" value="1"/>
</dbReference>
<dbReference type="PROSITE" id="PS00153">
    <property type="entry name" value="ATPASE_GAMMA"/>
    <property type="match status" value="1"/>
</dbReference>
<feature type="chain" id="PRO_1000134170" description="ATP synthase gamma chain">
    <location>
        <begin position="1"/>
        <end position="289"/>
    </location>
</feature>
<proteinExistence type="inferred from homology"/>
<comment type="function">
    <text evidence="1">Produces ATP from ADP in the presence of a proton gradient across the membrane. The gamma chain is believed to be important in regulating ATPase activity and the flow of protons through the CF(0) complex.</text>
</comment>
<comment type="subunit">
    <text evidence="1">F-type ATPases have 2 components, CF(1) - the catalytic core - and CF(0) - the membrane proton channel. CF(1) has five subunits: alpha(3), beta(3), gamma(1), delta(1), epsilon(1). CF(0) has three main subunits: a, b and c.</text>
</comment>
<comment type="subcellular location">
    <subcellularLocation>
        <location evidence="1">Cell inner membrane</location>
        <topology evidence="1">Peripheral membrane protein</topology>
    </subcellularLocation>
</comment>
<comment type="similarity">
    <text evidence="1">Belongs to the ATPase gamma chain family.</text>
</comment>